<comment type="function">
    <text evidence="1">GTPase activator for the Rho-type GTPases by converting them to an inactive GDP-bound state.</text>
</comment>
<comment type="subunit">
    <text evidence="2">May interacts (via the Rho-GAP domain) with the active form of RAC1.</text>
</comment>
<accession>A7MB27</accession>
<evidence type="ECO:0000250" key="1"/>
<evidence type="ECO:0000250" key="2">
    <source>
        <dbReference type="UniProtKB" id="Q6ZRI8"/>
    </source>
</evidence>
<evidence type="ECO:0000255" key="3"/>
<evidence type="ECO:0000255" key="4">
    <source>
        <dbReference type="PROSITE-ProRule" id="PRU00172"/>
    </source>
</evidence>
<evidence type="ECO:0000256" key="5">
    <source>
        <dbReference type="SAM" id="MobiDB-lite"/>
    </source>
</evidence>
<dbReference type="EMBL" id="BC151300">
    <property type="protein sequence ID" value="AAI51301.1"/>
    <property type="molecule type" value="mRNA"/>
</dbReference>
<dbReference type="RefSeq" id="NP_001095458.1">
    <property type="nucleotide sequence ID" value="NM_001101988.2"/>
</dbReference>
<dbReference type="SMR" id="A7MB27"/>
<dbReference type="FunCoup" id="A7MB27">
    <property type="interactions" value="22"/>
</dbReference>
<dbReference type="STRING" id="9913.ENSBTAP00000028237"/>
<dbReference type="PaxDb" id="9913-ENSBTAP00000028237"/>
<dbReference type="GeneID" id="514137"/>
<dbReference type="KEGG" id="bta:514137"/>
<dbReference type="CTD" id="158763"/>
<dbReference type="VEuPathDB" id="HostDB:ENSBTAG00000021189"/>
<dbReference type="eggNOG" id="KOG2710">
    <property type="taxonomic scope" value="Eukaryota"/>
</dbReference>
<dbReference type="HOGENOM" id="CLU_012874_1_1_1"/>
<dbReference type="InParanoid" id="A7MB27"/>
<dbReference type="OMA" id="NTFEKWF"/>
<dbReference type="OrthoDB" id="10024839at2759"/>
<dbReference type="TreeFam" id="TF316710"/>
<dbReference type="Proteomes" id="UP000009136">
    <property type="component" value="Chromosome X"/>
</dbReference>
<dbReference type="Bgee" id="ENSBTAG00000021189">
    <property type="expression patterns" value="Expressed in spermatocyte and 39 other cell types or tissues"/>
</dbReference>
<dbReference type="GO" id="GO:0005096">
    <property type="term" value="F:GTPase activator activity"/>
    <property type="evidence" value="ECO:0007669"/>
    <property type="project" value="UniProtKB-KW"/>
</dbReference>
<dbReference type="GO" id="GO:0007165">
    <property type="term" value="P:signal transduction"/>
    <property type="evidence" value="ECO:0007669"/>
    <property type="project" value="InterPro"/>
</dbReference>
<dbReference type="CDD" id="cd04376">
    <property type="entry name" value="RhoGAP_ARHGAP6"/>
    <property type="match status" value="1"/>
</dbReference>
<dbReference type="FunFam" id="1.10.555.10:FF:000017">
    <property type="entry name" value="Rho GTPase activating protein 6"/>
    <property type="match status" value="1"/>
</dbReference>
<dbReference type="Gene3D" id="1.10.555.10">
    <property type="entry name" value="Rho GTPase activation protein"/>
    <property type="match status" value="1"/>
</dbReference>
<dbReference type="InterPro" id="IPR041852">
    <property type="entry name" value="ARHGAP6_RhoGAP"/>
</dbReference>
<dbReference type="InterPro" id="IPR008936">
    <property type="entry name" value="Rho_GTPase_activation_prot"/>
</dbReference>
<dbReference type="InterPro" id="IPR037863">
    <property type="entry name" value="RHOGAP6/36"/>
</dbReference>
<dbReference type="InterPro" id="IPR000198">
    <property type="entry name" value="RhoGAP_dom"/>
</dbReference>
<dbReference type="PANTHER" id="PTHR12635:SF8">
    <property type="entry name" value="RHO GTPASE-ACTIVATING PROTEIN 36"/>
    <property type="match status" value="1"/>
</dbReference>
<dbReference type="PANTHER" id="PTHR12635">
    <property type="entry name" value="RHO-GTPASE-ACTIVATING PROTEIN 6 FAMILY MEMBER"/>
    <property type="match status" value="1"/>
</dbReference>
<dbReference type="Pfam" id="PF00620">
    <property type="entry name" value="RhoGAP"/>
    <property type="match status" value="1"/>
</dbReference>
<dbReference type="SMART" id="SM00324">
    <property type="entry name" value="RhoGAP"/>
    <property type="match status" value="1"/>
</dbReference>
<dbReference type="SUPFAM" id="SSF48350">
    <property type="entry name" value="GTPase activation domain, GAP"/>
    <property type="match status" value="1"/>
</dbReference>
<dbReference type="PROSITE" id="PS50238">
    <property type="entry name" value="RHOGAP"/>
    <property type="match status" value="1"/>
</dbReference>
<protein>
    <recommendedName>
        <fullName>Rho GTPase-activating protein 36</fullName>
    </recommendedName>
</protein>
<name>RHG36_BOVIN</name>
<feature type="signal peptide" evidence="3">
    <location>
        <begin position="1"/>
        <end position="19"/>
    </location>
</feature>
<feature type="chain" id="PRO_0000394287" description="Rho GTPase-activating protein 36">
    <location>
        <begin position="20"/>
        <end position="530"/>
    </location>
</feature>
<feature type="domain" description="Rho-GAP" evidence="4">
    <location>
        <begin position="209"/>
        <end position="409"/>
    </location>
</feature>
<feature type="region of interest" description="Disordered" evidence="5">
    <location>
        <begin position="471"/>
        <end position="512"/>
    </location>
</feature>
<feature type="site" description="Arginine finger; crucial for GTP hydrolysis by stabilizing the transition state" evidence="4">
    <location>
        <position position="241"/>
    </location>
</feature>
<organism>
    <name type="scientific">Bos taurus</name>
    <name type="common">Bovine</name>
    <dbReference type="NCBI Taxonomy" id="9913"/>
    <lineage>
        <taxon>Eukaryota</taxon>
        <taxon>Metazoa</taxon>
        <taxon>Chordata</taxon>
        <taxon>Craniata</taxon>
        <taxon>Vertebrata</taxon>
        <taxon>Euteleostomi</taxon>
        <taxon>Mammalia</taxon>
        <taxon>Eutheria</taxon>
        <taxon>Laurasiatheria</taxon>
        <taxon>Artiodactyla</taxon>
        <taxon>Ruminantia</taxon>
        <taxon>Pecora</taxon>
        <taxon>Bovidae</taxon>
        <taxon>Bovinae</taxon>
        <taxon>Bos</taxon>
    </lineage>
</organism>
<reference key="1">
    <citation type="submission" date="2007-07" db="EMBL/GenBank/DDBJ databases">
        <authorList>
            <consortium name="NIH - Mammalian Gene Collection (MGC) project"/>
        </authorList>
    </citation>
    <scope>NUCLEOTIDE SEQUENCE [LARGE SCALE MRNA]</scope>
    <source>
        <strain>Hereford</strain>
        <tissue>Hypothalamus</tissue>
    </source>
</reference>
<sequence>MPPLLLLSALIFLVNVLGGAPGHNPNRRAKMISIHSLSELERLKLQEAAYHELVARQFLSEFKPERALPTDRSNTFEKWFLILRGQERAVSLKTFGIRLEEVLVNELTRRKQVELRATMQMQEAAGPATSGRRRGNAVQRMFGRIRRIFSGRRDEPFLPREFTRRGRRGAVSADSLAELEGGALLLQTLQLSRISFPIGQRLLGSKRKMSLNPIAKQIPHVVEACCSFIEKHGLSTVGIFTLEYSEKRVRKLREEFDQGLDVVLDDSQNVHDVAALLKEFFRDMKDSLLPDDLYMSFLQTATLKPQDQLSALQLLVYLMPPCHSDTLERLLKVLHKVAENCEDSIGIDGQLVSGNRMTSTNLALVFGSALLKKGASAKRESRKTRLGIDHYVASVSVVRAMIDNWDVLFQVPPHIQKQVAKRVWKSSPEALDFIRRRNLRKIQSERIKMEEDALLSDPVETSAEARAAILGQSKPFDEGSSEEPAVPPGTARSHDDEEGAGNPLILEQDRPLLRVPREKEAKTGIGYFFP</sequence>
<proteinExistence type="evidence at transcript level"/>
<gene>
    <name type="primary">ARHGAP36</name>
</gene>
<keyword id="KW-0343">GTPase activation</keyword>
<keyword id="KW-1185">Reference proteome</keyword>
<keyword id="KW-0732">Signal</keyword>